<dbReference type="EMBL" id="X73113">
    <property type="protein sequence ID" value="CAA51544.1"/>
    <property type="molecule type" value="mRNA"/>
</dbReference>
<dbReference type="EMBL" id="AC020909">
    <property type="status" value="NOT_ANNOTATED_CDS"/>
    <property type="molecule type" value="Genomic_DNA"/>
</dbReference>
<dbReference type="EMBL" id="CH471135">
    <property type="protein sequence ID" value="EAW71866.1"/>
    <property type="molecule type" value="Genomic_DNA"/>
</dbReference>
<dbReference type="EMBL" id="BC130536">
    <property type="protein sequence ID" value="AAI30537.1"/>
    <property type="molecule type" value="mRNA"/>
</dbReference>
<dbReference type="EMBL" id="BC136389">
    <property type="protein sequence ID" value="AAI36390.1"/>
    <property type="molecule type" value="mRNA"/>
</dbReference>
<dbReference type="CCDS" id="CCDS46152.1"/>
<dbReference type="PIR" id="S36845">
    <property type="entry name" value="S36845"/>
</dbReference>
<dbReference type="RefSeq" id="NP_004524.3">
    <property type="nucleotide sequence ID" value="NM_004533.4"/>
</dbReference>
<dbReference type="PDB" id="2E7C">
    <property type="method" value="NMR"/>
    <property type="chains" value="A=824-934"/>
</dbReference>
<dbReference type="PDB" id="2EDK">
    <property type="method" value="NMR"/>
    <property type="chains" value="A=345-438"/>
</dbReference>
<dbReference type="PDB" id="2EDN">
    <property type="method" value="NMR"/>
    <property type="chains" value="A=47-157"/>
</dbReference>
<dbReference type="PDBsum" id="2E7C"/>
<dbReference type="PDBsum" id="2EDK"/>
<dbReference type="PDBsum" id="2EDN"/>
<dbReference type="SMR" id="Q14324"/>
<dbReference type="BioGRID" id="110691">
    <property type="interactions" value="45"/>
</dbReference>
<dbReference type="FunCoup" id="Q14324">
    <property type="interactions" value="444"/>
</dbReference>
<dbReference type="IntAct" id="Q14324">
    <property type="interactions" value="37"/>
</dbReference>
<dbReference type="MINT" id="Q14324"/>
<dbReference type="STRING" id="9606.ENSP00000350332"/>
<dbReference type="CarbonylDB" id="Q14324"/>
<dbReference type="GlyGen" id="Q14324">
    <property type="glycosylation" value="2 sites, 1 O-linked glycan (1 site)"/>
</dbReference>
<dbReference type="iPTMnet" id="Q14324"/>
<dbReference type="PhosphoSitePlus" id="Q14324"/>
<dbReference type="BioMuta" id="MYBPC2"/>
<dbReference type="DMDM" id="296439237"/>
<dbReference type="REPRODUCTION-2DPAGE" id="IPI00030104"/>
<dbReference type="jPOST" id="Q14324"/>
<dbReference type="MassIVE" id="Q14324"/>
<dbReference type="PaxDb" id="9606-ENSP00000350332"/>
<dbReference type="PeptideAtlas" id="Q14324"/>
<dbReference type="ProteomicsDB" id="59965"/>
<dbReference type="Antibodypedia" id="32323">
    <property type="antibodies" value="173 antibodies from 32 providers"/>
</dbReference>
<dbReference type="DNASU" id="4606"/>
<dbReference type="Ensembl" id="ENST00000357701.6">
    <property type="protein sequence ID" value="ENSP00000350332.4"/>
    <property type="gene ID" value="ENSG00000086967.10"/>
</dbReference>
<dbReference type="GeneID" id="4606"/>
<dbReference type="KEGG" id="hsa:4606"/>
<dbReference type="MANE-Select" id="ENST00000357701.6">
    <property type="protein sequence ID" value="ENSP00000350332.4"/>
    <property type="RefSeq nucleotide sequence ID" value="NM_004533.4"/>
    <property type="RefSeq protein sequence ID" value="NP_004524.3"/>
</dbReference>
<dbReference type="UCSC" id="uc002psf.3">
    <property type="organism name" value="human"/>
</dbReference>
<dbReference type="AGR" id="HGNC:7550"/>
<dbReference type="CTD" id="4606"/>
<dbReference type="DisGeNET" id="4606"/>
<dbReference type="GeneCards" id="MYBPC2"/>
<dbReference type="HGNC" id="HGNC:7550">
    <property type="gene designation" value="MYBPC2"/>
</dbReference>
<dbReference type="HPA" id="ENSG00000086967">
    <property type="expression patterns" value="Group enriched (skeletal muscle, tongue)"/>
</dbReference>
<dbReference type="MIM" id="160793">
    <property type="type" value="gene"/>
</dbReference>
<dbReference type="neXtProt" id="NX_Q14324"/>
<dbReference type="OpenTargets" id="ENSG00000086967"/>
<dbReference type="PharmGKB" id="PA31350"/>
<dbReference type="VEuPathDB" id="HostDB:ENSG00000086967"/>
<dbReference type="eggNOG" id="ENOG502QW17">
    <property type="taxonomic scope" value="Eukaryota"/>
</dbReference>
<dbReference type="GeneTree" id="ENSGT00940000160092"/>
<dbReference type="HOGENOM" id="CLU_006405_1_1_1"/>
<dbReference type="InParanoid" id="Q14324"/>
<dbReference type="OMA" id="YEHSRHT"/>
<dbReference type="OrthoDB" id="6107607at2759"/>
<dbReference type="PAN-GO" id="Q14324">
    <property type="GO annotations" value="0 GO annotations based on evolutionary models"/>
</dbReference>
<dbReference type="PhylomeDB" id="Q14324"/>
<dbReference type="TreeFam" id="TF351819"/>
<dbReference type="PathwayCommons" id="Q14324"/>
<dbReference type="Reactome" id="R-HSA-390522">
    <property type="pathway name" value="Striated Muscle Contraction"/>
</dbReference>
<dbReference type="SignaLink" id="Q14324"/>
<dbReference type="BioGRID-ORCS" id="4606">
    <property type="hits" value="15 hits in 1144 CRISPR screens"/>
</dbReference>
<dbReference type="ChiTaRS" id="MYBPC2">
    <property type="organism name" value="human"/>
</dbReference>
<dbReference type="EvolutionaryTrace" id="Q14324"/>
<dbReference type="GenomeRNAi" id="4606"/>
<dbReference type="Pharos" id="Q14324">
    <property type="development level" value="Tbio"/>
</dbReference>
<dbReference type="PRO" id="PR:Q14324"/>
<dbReference type="Proteomes" id="UP000005640">
    <property type="component" value="Chromosome 19"/>
</dbReference>
<dbReference type="RNAct" id="Q14324">
    <property type="molecule type" value="protein"/>
</dbReference>
<dbReference type="Bgee" id="ENSG00000086967">
    <property type="expression patterns" value="Expressed in vastus lateralis and 115 other cell types or tissues"/>
</dbReference>
<dbReference type="ExpressionAtlas" id="Q14324">
    <property type="expression patterns" value="baseline and differential"/>
</dbReference>
<dbReference type="GO" id="GO:0005829">
    <property type="term" value="C:cytosol"/>
    <property type="evidence" value="ECO:0000304"/>
    <property type="project" value="Reactome"/>
</dbReference>
<dbReference type="GO" id="GO:0031430">
    <property type="term" value="C:M band"/>
    <property type="evidence" value="ECO:0000318"/>
    <property type="project" value="GO_Central"/>
</dbReference>
<dbReference type="GO" id="GO:0032982">
    <property type="term" value="C:myosin filament"/>
    <property type="evidence" value="ECO:0007669"/>
    <property type="project" value="UniProtKB-KW"/>
</dbReference>
<dbReference type="GO" id="GO:0003779">
    <property type="term" value="F:actin binding"/>
    <property type="evidence" value="ECO:0007669"/>
    <property type="project" value="UniProtKB-KW"/>
</dbReference>
<dbReference type="GO" id="GO:0008307">
    <property type="term" value="F:structural constituent of muscle"/>
    <property type="evidence" value="ECO:0000304"/>
    <property type="project" value="ProtInc"/>
</dbReference>
<dbReference type="GO" id="GO:0007155">
    <property type="term" value="P:cell adhesion"/>
    <property type="evidence" value="ECO:0007669"/>
    <property type="project" value="UniProtKB-KW"/>
</dbReference>
<dbReference type="GO" id="GO:0045214">
    <property type="term" value="P:sarcomere organization"/>
    <property type="evidence" value="ECO:0000318"/>
    <property type="project" value="GO_Central"/>
</dbReference>
<dbReference type="CDD" id="cd00063">
    <property type="entry name" value="FN3"/>
    <property type="match status" value="3"/>
</dbReference>
<dbReference type="CDD" id="cd00096">
    <property type="entry name" value="Ig"/>
    <property type="match status" value="1"/>
</dbReference>
<dbReference type="CDD" id="cd05894">
    <property type="entry name" value="Ig_C5_MyBP-C"/>
    <property type="match status" value="1"/>
</dbReference>
<dbReference type="CDD" id="cd05748">
    <property type="entry name" value="Ig_Titin_like"/>
    <property type="match status" value="1"/>
</dbReference>
<dbReference type="FunFam" id="2.60.40.10:FF:000646">
    <property type="entry name" value="Myosin binding protein C, fast type"/>
    <property type="match status" value="1"/>
</dbReference>
<dbReference type="FunFam" id="2.60.40.10:FF:001216">
    <property type="entry name" value="Myosin binding protein C, fast type"/>
    <property type="match status" value="1"/>
</dbReference>
<dbReference type="FunFam" id="2.60.40.10:FF:000225">
    <property type="entry name" value="Myosin-binding protein C, cardiac-type"/>
    <property type="match status" value="1"/>
</dbReference>
<dbReference type="FunFam" id="2.60.40.10:FF:000326">
    <property type="entry name" value="Myosin-binding protein C, cardiac-type"/>
    <property type="match status" value="1"/>
</dbReference>
<dbReference type="FunFam" id="2.60.40.10:FF:000031">
    <property type="entry name" value="Myosin-binding protein C, slow type"/>
    <property type="match status" value="1"/>
</dbReference>
<dbReference type="FunFam" id="2.60.40.10:FF:000060">
    <property type="entry name" value="Myosin-binding protein C, slow type"/>
    <property type="match status" value="1"/>
</dbReference>
<dbReference type="FunFam" id="2.60.40.10:FF:000062">
    <property type="entry name" value="Myosin-binding protein C, slow type"/>
    <property type="match status" value="1"/>
</dbReference>
<dbReference type="FunFam" id="2.60.40.10:FF:000070">
    <property type="entry name" value="Myosin-binding protein C, slow type"/>
    <property type="match status" value="1"/>
</dbReference>
<dbReference type="FunFam" id="2.60.40.10:FF:000081">
    <property type="entry name" value="Myosin-binding protein C, slow type"/>
    <property type="match status" value="1"/>
</dbReference>
<dbReference type="FunFam" id="2.60.40.10:FF:000085">
    <property type="entry name" value="Myosin-binding protein C, slow type"/>
    <property type="match status" value="1"/>
</dbReference>
<dbReference type="Gene3D" id="2.60.40.10">
    <property type="entry name" value="Immunoglobulins"/>
    <property type="match status" value="10"/>
</dbReference>
<dbReference type="InterPro" id="IPR003961">
    <property type="entry name" value="FN3_dom"/>
</dbReference>
<dbReference type="InterPro" id="IPR036116">
    <property type="entry name" value="FN3_sf"/>
</dbReference>
<dbReference type="InterPro" id="IPR007110">
    <property type="entry name" value="Ig-like_dom"/>
</dbReference>
<dbReference type="InterPro" id="IPR036179">
    <property type="entry name" value="Ig-like_dom_sf"/>
</dbReference>
<dbReference type="InterPro" id="IPR013783">
    <property type="entry name" value="Ig-like_fold"/>
</dbReference>
<dbReference type="InterPro" id="IPR013098">
    <property type="entry name" value="Ig_I-set"/>
</dbReference>
<dbReference type="InterPro" id="IPR003599">
    <property type="entry name" value="Ig_sub"/>
</dbReference>
<dbReference type="InterPro" id="IPR003598">
    <property type="entry name" value="Ig_sub2"/>
</dbReference>
<dbReference type="InterPro" id="IPR040849">
    <property type="entry name" value="MyBP-C_THB"/>
</dbReference>
<dbReference type="InterPro" id="IPR050964">
    <property type="entry name" value="Striated_Muscle_Regulatory"/>
</dbReference>
<dbReference type="PANTHER" id="PTHR13817:SF17">
    <property type="entry name" value="MYOSIN-BINDING PROTEIN C, FAST-TYPE"/>
    <property type="match status" value="1"/>
</dbReference>
<dbReference type="PANTHER" id="PTHR13817">
    <property type="entry name" value="TITIN"/>
    <property type="match status" value="1"/>
</dbReference>
<dbReference type="Pfam" id="PF00041">
    <property type="entry name" value="fn3"/>
    <property type="match status" value="3"/>
</dbReference>
<dbReference type="Pfam" id="PF07679">
    <property type="entry name" value="I-set"/>
    <property type="match status" value="6"/>
</dbReference>
<dbReference type="Pfam" id="PF18362">
    <property type="entry name" value="THB"/>
    <property type="match status" value="1"/>
</dbReference>
<dbReference type="PRINTS" id="PR00014">
    <property type="entry name" value="FNTYPEIII"/>
</dbReference>
<dbReference type="SMART" id="SM00060">
    <property type="entry name" value="FN3"/>
    <property type="match status" value="3"/>
</dbReference>
<dbReference type="SMART" id="SM00409">
    <property type="entry name" value="IG"/>
    <property type="match status" value="7"/>
</dbReference>
<dbReference type="SMART" id="SM00408">
    <property type="entry name" value="IGc2"/>
    <property type="match status" value="4"/>
</dbReference>
<dbReference type="SUPFAM" id="SSF49265">
    <property type="entry name" value="Fibronectin type III"/>
    <property type="match status" value="2"/>
</dbReference>
<dbReference type="SUPFAM" id="SSF48726">
    <property type="entry name" value="Immunoglobulin"/>
    <property type="match status" value="7"/>
</dbReference>
<dbReference type="PROSITE" id="PS50853">
    <property type="entry name" value="FN3"/>
    <property type="match status" value="3"/>
</dbReference>
<dbReference type="PROSITE" id="PS50835">
    <property type="entry name" value="IG_LIKE"/>
    <property type="match status" value="5"/>
</dbReference>
<accession>Q14324</accession>
<accession>A1L4G9</accession>
<evidence type="ECO:0000255" key="1">
    <source>
        <dbReference type="PROSITE-ProRule" id="PRU00316"/>
    </source>
</evidence>
<evidence type="ECO:0000256" key="2">
    <source>
        <dbReference type="SAM" id="MobiDB-lite"/>
    </source>
</evidence>
<evidence type="ECO:0000305" key="3"/>
<evidence type="ECO:0007829" key="4">
    <source>
        <dbReference type="PDB" id="2E7C"/>
    </source>
</evidence>
<evidence type="ECO:0007829" key="5">
    <source>
        <dbReference type="PDB" id="2EDK"/>
    </source>
</evidence>
<evidence type="ECO:0007829" key="6">
    <source>
        <dbReference type="PDB" id="2EDN"/>
    </source>
</evidence>
<sequence>MPEAKPAAKKAPKGKDAPKGAPKEAPPKEAPAEAPKEAPPEDQSPTAEEPTGVFLKKPDSVSVETGKDAVVVAKVNGKELPDKPTIKWFKGKWLELGSKSGARFSFKESHNSASNVYTVELHIGKVVLGDRGYYRLEVKAKDTCDSCGFNIDVEAPRQDASGQSLESFKRTSEKKSDTAGELDFSGLLKKREVVEEEKKKKKKDDDDLGIPPEIWELLKGAKKSEYEKIAFQYGITDLRGMLKRLKKAKVEVKKSAAFTKKLDPAYQVDRGNKIKLMVEISDPDLTLKWFKNGQEIKPSSKYVFENVGKKRILTINKCTLADDAAYEVAVKDEKCFTELFVKEPPVLIVTPLEDQQVFVGDRVEMAVEVSEEGAQVMWMKDGVELTREDSFKARYRFKKDGKRHILIFSDVVQEDRGRYQVITNGGQCEAELIVEEKQLEVLQDIADLTVKASEQAVFKCEVSDEKVTGKWYKNGVEVRPSKRITISHVGRFHKLVIDDVRPEDEGDYTFVPDGYALSLSAKLNFLEIKVEYVPKQEPPKIHLDCSGKTSENAIVVVAGNKLRLDVSITGEPPPVATWLKGDEVFTTTEGRTRIEKRVDCSSFVIESAQREDEGRYTIKVTNPVGEDVASIFLQVVDVPDPPEAVRITSVGEDWAILVWEPPMYDGGKPVTGYLVERKKKGSQRWMKLNFEVFTETTYESTKMIEGILYEMRVFAVNAIGVSQPSMNTKPFMPIAPTSEPLHLIVEDVTDTTTTLKWRPPNRIGAGGIDGYLVEYCLEGSEEWVPANTEPVERCGFTVKNLPTGARILFRVVGVNIAGRSEPATLAQPVTIREIAEPPKIRLPRHLRQTYIRKVGEQLNLVVPFQGKPRPQVVWTKGGAPLDTSRVHVRTSDFDTVFFVRQAARSDSGEYELSVQIENMKDTATIRIRVVEKAGPPINVMVKEVWGTNALVEWQAPKDDGNSEIMGYFVQKADKKTMEWFNVYERNRHTSCTVSDLIVGNEYYFRVYTENICGLSDSPGVSKNTARILKTGITFKPFEYKEHDFRMAPKFLTPLIDRVVVAGYSAALNCAVRGHPKPKVVWMKNKMEIREDPKFLITNYQGVLTLNIRRPSPFDAGTYTCRAVNELGEALAECKLEVRVPQ</sequence>
<feature type="chain" id="PRO_0000072691" description="Myosin-binding protein C, fast-type">
    <location>
        <begin position="1"/>
        <end position="1141"/>
    </location>
</feature>
<feature type="domain" description="Ig-like C2-type 1">
    <location>
        <begin position="50"/>
        <end position="153"/>
    </location>
</feature>
<feature type="domain" description="Ig-like C2-type 2">
    <location>
        <begin position="255"/>
        <end position="344"/>
    </location>
</feature>
<feature type="domain" description="Ig-like C2-type 3">
    <location>
        <begin position="345"/>
        <end position="437"/>
    </location>
</feature>
<feature type="domain" description="Ig-like C2-type 4">
    <location>
        <begin position="438"/>
        <end position="538"/>
    </location>
</feature>
<feature type="domain" description="Ig-like C2-type 5">
    <location>
        <begin position="539"/>
        <end position="638"/>
    </location>
</feature>
<feature type="domain" description="Fibronectin type-III 1" evidence="1">
    <location>
        <begin position="641"/>
        <end position="737"/>
    </location>
</feature>
<feature type="domain" description="Fibronectin type-III 2" evidence="1">
    <location>
        <begin position="739"/>
        <end position="834"/>
    </location>
</feature>
<feature type="domain" description="Ig-like C2-type 6">
    <location>
        <begin position="838"/>
        <end position="932"/>
    </location>
</feature>
<feature type="domain" description="Fibronectin type-III 3" evidence="1">
    <location>
        <begin position="935"/>
        <end position="1030"/>
    </location>
</feature>
<feature type="domain" description="Ig-like C2-type 7">
    <location>
        <begin position="1048"/>
        <end position="1141"/>
    </location>
</feature>
<feature type="region of interest" description="Disordered" evidence="2">
    <location>
        <begin position="1"/>
        <end position="62"/>
    </location>
</feature>
<feature type="compositionally biased region" description="Basic and acidic residues" evidence="2">
    <location>
        <begin position="13"/>
        <end position="39"/>
    </location>
</feature>
<feature type="sequence variant" id="VAR_061321" description="In dbSNP:rs57092106.">
    <original>E</original>
    <variation>K</variation>
    <location>
        <position position="29"/>
    </location>
</feature>
<feature type="sequence variant" id="VAR_014657" description="In dbSNP:rs25669.">
    <original>G</original>
    <variation>S</variation>
    <location>
        <position position="52"/>
    </location>
</feature>
<feature type="sequence variant" id="VAR_056060" description="In dbSNP:rs35951152.">
    <original>D</original>
    <variation>N</variation>
    <location>
        <position position="282"/>
    </location>
</feature>
<feature type="sequence variant" id="VAR_061322" description="In dbSNP:rs58511181.">
    <original>V</original>
    <variation>I</variation>
    <location>
        <position position="341"/>
    </location>
</feature>
<feature type="sequence variant" id="VAR_056061" description="In dbSNP:rs8104931.">
    <original>G</original>
    <variation>S</variation>
    <location>
        <position position="514"/>
    </location>
</feature>
<feature type="sequence variant" id="VAR_014658" description="In dbSNP:rs25665.">
    <original>V</original>
    <variation>I</variation>
    <location>
        <position position="624"/>
    </location>
</feature>
<feature type="sequence variant" id="VAR_014659" description="In dbSNP:rs25667.">
    <original>R</original>
    <variation>H</variation>
    <location>
        <position position="1089"/>
    </location>
</feature>
<feature type="sequence conflict" description="In Ref. 1; CAA51544." evidence="3" ref="1">
    <original>L</original>
    <variation>LG</variation>
    <location>
        <position position="517"/>
    </location>
</feature>
<feature type="sequence conflict" description="In Ref. 1; CAA51544." evidence="3" ref="1">
    <original>S</original>
    <variation>T</variation>
    <location>
        <position position="820"/>
    </location>
</feature>
<feature type="strand" evidence="6">
    <location>
        <begin position="51"/>
        <end position="53"/>
    </location>
</feature>
<feature type="strand" evidence="6">
    <location>
        <begin position="62"/>
        <end position="64"/>
    </location>
</feature>
<feature type="strand" evidence="6">
    <location>
        <begin position="73"/>
        <end position="76"/>
    </location>
</feature>
<feature type="turn" evidence="6">
    <location>
        <begin position="77"/>
        <end position="79"/>
    </location>
</feature>
<feature type="strand" evidence="6">
    <location>
        <begin position="80"/>
        <end position="82"/>
    </location>
</feature>
<feature type="strand" evidence="6">
    <location>
        <begin position="87"/>
        <end position="90"/>
    </location>
</feature>
<feature type="turn" evidence="6">
    <location>
        <begin position="91"/>
        <end position="93"/>
    </location>
</feature>
<feature type="strand" evidence="6">
    <location>
        <begin position="105"/>
        <end position="110"/>
    </location>
</feature>
<feature type="strand" evidence="6">
    <location>
        <begin position="112"/>
        <end position="114"/>
    </location>
</feature>
<feature type="strand" evidence="6">
    <location>
        <begin position="116"/>
        <end position="125"/>
    </location>
</feature>
<feature type="turn" evidence="6">
    <location>
        <begin position="128"/>
        <end position="130"/>
    </location>
</feature>
<feature type="strand" evidence="6">
    <location>
        <begin position="134"/>
        <end position="139"/>
    </location>
</feature>
<feature type="strand" evidence="6">
    <location>
        <begin position="144"/>
        <end position="149"/>
    </location>
</feature>
<feature type="strand" evidence="6">
    <location>
        <begin position="152"/>
        <end position="154"/>
    </location>
</feature>
<feature type="strand" evidence="5">
    <location>
        <begin position="348"/>
        <end position="350"/>
    </location>
</feature>
<feature type="strand" evidence="5">
    <location>
        <begin position="355"/>
        <end position="360"/>
    </location>
</feature>
<feature type="strand" evidence="5">
    <location>
        <begin position="367"/>
        <end position="370"/>
    </location>
</feature>
<feature type="strand" evidence="5">
    <location>
        <begin position="377"/>
        <end position="382"/>
    </location>
</feature>
<feature type="strand" evidence="5">
    <location>
        <begin position="396"/>
        <end position="399"/>
    </location>
</feature>
<feature type="strand" evidence="5">
    <location>
        <begin position="401"/>
        <end position="407"/>
    </location>
</feature>
<feature type="helix" evidence="5">
    <location>
        <begin position="413"/>
        <end position="415"/>
    </location>
</feature>
<feature type="strand" evidence="5">
    <location>
        <begin position="417"/>
        <end position="422"/>
    </location>
</feature>
<feature type="strand" evidence="5">
    <location>
        <begin position="431"/>
        <end position="435"/>
    </location>
</feature>
<feature type="strand" evidence="4">
    <location>
        <begin position="835"/>
        <end position="840"/>
    </location>
</feature>
<feature type="turn" evidence="4">
    <location>
        <begin position="844"/>
        <end position="846"/>
    </location>
</feature>
<feature type="strand" evidence="4">
    <location>
        <begin position="850"/>
        <end position="856"/>
    </location>
</feature>
<feature type="strand" evidence="4">
    <location>
        <begin position="858"/>
        <end position="868"/>
    </location>
</feature>
<feature type="strand" evidence="4">
    <location>
        <begin position="871"/>
        <end position="876"/>
    </location>
</feature>
<feature type="strand" evidence="4">
    <location>
        <begin position="887"/>
        <end position="890"/>
    </location>
</feature>
<feature type="strand" evidence="4">
    <location>
        <begin position="892"/>
        <end position="901"/>
    </location>
</feature>
<feature type="turn" evidence="4">
    <location>
        <begin position="904"/>
        <end position="906"/>
    </location>
</feature>
<feature type="strand" evidence="4">
    <location>
        <begin position="908"/>
        <end position="915"/>
    </location>
</feature>
<feature type="strand" evidence="4">
    <location>
        <begin position="924"/>
        <end position="930"/>
    </location>
</feature>
<keyword id="KW-0002">3D-structure</keyword>
<keyword id="KW-0009">Actin-binding</keyword>
<keyword id="KW-0130">Cell adhesion</keyword>
<keyword id="KW-0393">Immunoglobulin domain</keyword>
<keyword id="KW-0514">Muscle protein</keyword>
<keyword id="KW-1267">Proteomics identification</keyword>
<keyword id="KW-1185">Reference proteome</keyword>
<keyword id="KW-0677">Repeat</keyword>
<keyword id="KW-0787">Thick filament</keyword>
<proteinExistence type="evidence at protein level"/>
<gene>
    <name type="primary">MYBPC2</name>
    <name type="synonym">MYBPCF</name>
</gene>
<name>MYPC2_HUMAN</name>
<protein>
    <recommendedName>
        <fullName>Myosin-binding protein C, fast-type</fullName>
        <shortName>Fast MyBP-C</shortName>
    </recommendedName>
    <alternativeName>
        <fullName>C-protein, skeletal muscle fast isoform</fullName>
    </alternativeName>
</protein>
<comment type="function">
    <text>Thick filament-associated protein located in the crossbridge region of vertebrate striated muscle a bands. In vitro it binds MHC, F-actin and native thin filaments, and modifies the activity of actin-activated myosin ATPase. It may modulate muscle contraction or may play a more structural role.</text>
</comment>
<comment type="interaction">
    <interactant intactId="EBI-5653200">
        <id>Q14324</id>
    </interactant>
    <interactant intactId="EBI-5652924">
        <id>Q00872</id>
        <label>MYBPC1</label>
    </interactant>
    <organismsDiffer>false</organismsDiffer>
    <experiments>3</experiments>
</comment>
<comment type="interaction">
    <interactant intactId="EBI-5653200">
        <id>Q14324</id>
    </interactant>
    <interactant intactId="EBI-6503765">
        <id>Q8IVP1</id>
        <label>SH3GL3</label>
    </interactant>
    <organismsDiffer>false</organismsDiffer>
    <experiments>3</experiments>
</comment>
<comment type="interaction">
    <interactant intactId="EBI-5653200">
        <id>Q14324</id>
    </interactant>
    <interactant intactId="EBI-681210">
        <id>Q8WZ42</id>
        <label>TTN</label>
    </interactant>
    <organismsDiffer>false</organismsDiffer>
    <experiments>14</experiments>
</comment>
<comment type="similarity">
    <text evidence="3">Belongs to the immunoglobulin superfamily. MyBP family.</text>
</comment>
<organism>
    <name type="scientific">Homo sapiens</name>
    <name type="common">Human</name>
    <dbReference type="NCBI Taxonomy" id="9606"/>
    <lineage>
        <taxon>Eukaryota</taxon>
        <taxon>Metazoa</taxon>
        <taxon>Chordata</taxon>
        <taxon>Craniata</taxon>
        <taxon>Vertebrata</taxon>
        <taxon>Euteleostomi</taxon>
        <taxon>Mammalia</taxon>
        <taxon>Eutheria</taxon>
        <taxon>Euarchontoglires</taxon>
        <taxon>Primates</taxon>
        <taxon>Haplorrhini</taxon>
        <taxon>Catarrhini</taxon>
        <taxon>Hominidae</taxon>
        <taxon>Homo</taxon>
    </lineage>
</organism>
<reference key="1">
    <citation type="journal article" date="1993" name="Eur. J. Biochem.">
        <title>Complete sequence of human fast-type and slow-type muscle myosin-binding-protein C (MyBP-C). Differential expression, conserved domain structure and chromosome assignment.</title>
        <authorList>
            <person name="Weber F.E."/>
            <person name="Vaughan K.T."/>
            <person name="Reinach F.C."/>
            <person name="Fischman D.A."/>
        </authorList>
    </citation>
    <scope>NUCLEOTIDE SEQUENCE [MRNA]</scope>
    <source>
        <tissue>Fetal skeletal muscle</tissue>
    </source>
</reference>
<reference key="2">
    <citation type="journal article" date="2004" name="Nature">
        <title>The DNA sequence and biology of human chromosome 19.</title>
        <authorList>
            <person name="Grimwood J."/>
            <person name="Gordon L.A."/>
            <person name="Olsen A.S."/>
            <person name="Terry A."/>
            <person name="Schmutz J."/>
            <person name="Lamerdin J.E."/>
            <person name="Hellsten U."/>
            <person name="Goodstein D."/>
            <person name="Couronne O."/>
            <person name="Tran-Gyamfi M."/>
            <person name="Aerts A."/>
            <person name="Altherr M."/>
            <person name="Ashworth L."/>
            <person name="Bajorek E."/>
            <person name="Black S."/>
            <person name="Branscomb E."/>
            <person name="Caenepeel S."/>
            <person name="Carrano A.V."/>
            <person name="Caoile C."/>
            <person name="Chan Y.M."/>
            <person name="Christensen M."/>
            <person name="Cleland C.A."/>
            <person name="Copeland A."/>
            <person name="Dalin E."/>
            <person name="Dehal P."/>
            <person name="Denys M."/>
            <person name="Detter J.C."/>
            <person name="Escobar J."/>
            <person name="Flowers D."/>
            <person name="Fotopulos D."/>
            <person name="Garcia C."/>
            <person name="Georgescu A.M."/>
            <person name="Glavina T."/>
            <person name="Gomez M."/>
            <person name="Gonzales E."/>
            <person name="Groza M."/>
            <person name="Hammon N."/>
            <person name="Hawkins T."/>
            <person name="Haydu L."/>
            <person name="Ho I."/>
            <person name="Huang W."/>
            <person name="Israni S."/>
            <person name="Jett J."/>
            <person name="Kadner K."/>
            <person name="Kimball H."/>
            <person name="Kobayashi A."/>
            <person name="Larionov V."/>
            <person name="Leem S.-H."/>
            <person name="Lopez F."/>
            <person name="Lou Y."/>
            <person name="Lowry S."/>
            <person name="Malfatti S."/>
            <person name="Martinez D."/>
            <person name="McCready P.M."/>
            <person name="Medina C."/>
            <person name="Morgan J."/>
            <person name="Nelson K."/>
            <person name="Nolan M."/>
            <person name="Ovcharenko I."/>
            <person name="Pitluck S."/>
            <person name="Pollard M."/>
            <person name="Popkie A.P."/>
            <person name="Predki P."/>
            <person name="Quan G."/>
            <person name="Ramirez L."/>
            <person name="Rash S."/>
            <person name="Retterer J."/>
            <person name="Rodriguez A."/>
            <person name="Rogers S."/>
            <person name="Salamov A."/>
            <person name="Salazar A."/>
            <person name="She X."/>
            <person name="Smith D."/>
            <person name="Slezak T."/>
            <person name="Solovyev V."/>
            <person name="Thayer N."/>
            <person name="Tice H."/>
            <person name="Tsai M."/>
            <person name="Ustaszewska A."/>
            <person name="Vo N."/>
            <person name="Wagner M."/>
            <person name="Wheeler J."/>
            <person name="Wu K."/>
            <person name="Xie G."/>
            <person name="Yang J."/>
            <person name="Dubchak I."/>
            <person name="Furey T.S."/>
            <person name="DeJong P."/>
            <person name="Dickson M."/>
            <person name="Gordon D."/>
            <person name="Eichler E.E."/>
            <person name="Pennacchio L.A."/>
            <person name="Richardson P."/>
            <person name="Stubbs L."/>
            <person name="Rokhsar D.S."/>
            <person name="Myers R.M."/>
            <person name="Rubin E.M."/>
            <person name="Lucas S.M."/>
        </authorList>
    </citation>
    <scope>NUCLEOTIDE SEQUENCE [LARGE SCALE GENOMIC DNA]</scope>
</reference>
<reference key="3">
    <citation type="submission" date="2005-07" db="EMBL/GenBank/DDBJ databases">
        <authorList>
            <person name="Mural R.J."/>
            <person name="Istrail S."/>
            <person name="Sutton G.G."/>
            <person name="Florea L."/>
            <person name="Halpern A.L."/>
            <person name="Mobarry C.M."/>
            <person name="Lippert R."/>
            <person name="Walenz B."/>
            <person name="Shatkay H."/>
            <person name="Dew I."/>
            <person name="Miller J.R."/>
            <person name="Flanigan M.J."/>
            <person name="Edwards N.J."/>
            <person name="Bolanos R."/>
            <person name="Fasulo D."/>
            <person name="Halldorsson B.V."/>
            <person name="Hannenhalli S."/>
            <person name="Turner R."/>
            <person name="Yooseph S."/>
            <person name="Lu F."/>
            <person name="Nusskern D.R."/>
            <person name="Shue B.C."/>
            <person name="Zheng X.H."/>
            <person name="Zhong F."/>
            <person name="Delcher A.L."/>
            <person name="Huson D.H."/>
            <person name="Kravitz S.A."/>
            <person name="Mouchard L."/>
            <person name="Reinert K."/>
            <person name="Remington K.A."/>
            <person name="Clark A.G."/>
            <person name="Waterman M.S."/>
            <person name="Eichler E.E."/>
            <person name="Adams M.D."/>
            <person name="Hunkapiller M.W."/>
            <person name="Myers E.W."/>
            <person name="Venter J.C."/>
        </authorList>
    </citation>
    <scope>NUCLEOTIDE SEQUENCE [LARGE SCALE GENOMIC DNA]</scope>
</reference>
<reference key="4">
    <citation type="journal article" date="2004" name="Genome Res.">
        <title>The status, quality, and expansion of the NIH full-length cDNA project: the Mammalian Gene Collection (MGC).</title>
        <authorList>
            <consortium name="The MGC Project Team"/>
        </authorList>
    </citation>
    <scope>NUCLEOTIDE SEQUENCE [LARGE SCALE MRNA]</scope>
</reference>
<reference key="5">
    <citation type="submission" date="2007-08" db="PDB data bank">
        <title>Solution structure of the first, third and 6th Ig-like domains from human myosin-binding protein c, fast-type.</title>
        <authorList>
            <consortium name="RIKEN structural genomics initiative (RSGI)"/>
        </authorList>
    </citation>
    <scope>STRUCTURE BY NMR OF 44-157; 345-438 AND 825-935</scope>
</reference>